<proteinExistence type="evidence at protein level"/>
<accession>Q04347</accession>
<accession>D6VZI8</accession>
<accession>Q6B299</accession>
<feature type="chain" id="PRO_0000065014" description="Bud site selection protein 22">
    <location>
        <begin position="1"/>
        <end position="519"/>
    </location>
</feature>
<feature type="region of interest" description="Disordered" evidence="2">
    <location>
        <begin position="241"/>
        <end position="497"/>
    </location>
</feature>
<feature type="coiled-coil region" evidence="1">
    <location>
        <begin position="426"/>
        <end position="470"/>
    </location>
</feature>
<feature type="compositionally biased region" description="Polar residues" evidence="2">
    <location>
        <begin position="244"/>
        <end position="254"/>
    </location>
</feature>
<feature type="compositionally biased region" description="Polar residues" evidence="2">
    <location>
        <begin position="267"/>
        <end position="282"/>
    </location>
</feature>
<feature type="compositionally biased region" description="Acidic residues" evidence="2">
    <location>
        <begin position="321"/>
        <end position="337"/>
    </location>
</feature>
<feature type="compositionally biased region" description="Basic and acidic residues" evidence="2">
    <location>
        <begin position="338"/>
        <end position="348"/>
    </location>
</feature>
<feature type="compositionally biased region" description="Basic residues" evidence="2">
    <location>
        <begin position="407"/>
        <end position="420"/>
    </location>
</feature>
<feature type="compositionally biased region" description="Basic and acidic residues" evidence="2">
    <location>
        <begin position="431"/>
        <end position="459"/>
    </location>
</feature>
<feature type="compositionally biased region" description="Basic and acidic residues" evidence="2">
    <location>
        <begin position="466"/>
        <end position="497"/>
    </location>
</feature>
<feature type="modified residue" description="Phosphothreonine" evidence="7 8 9 10">
    <location>
        <position position="257"/>
    </location>
</feature>
<feature type="modified residue" description="Phosphoserine" evidence="8 10">
    <location>
        <position position="367"/>
    </location>
</feature>
<feature type="modified residue" description="Phosphothreonine" evidence="8 10">
    <location>
        <position position="371"/>
    </location>
</feature>
<feature type="modified residue" description="Phosphoserine" evidence="8 10">
    <location>
        <position position="375"/>
    </location>
</feature>
<feature type="sequence conflict" description="In Ref. 3; AAT92850." evidence="6" ref="3">
    <original>I</original>
    <variation>V</variation>
    <location>
        <position position="497"/>
    </location>
</feature>
<protein>
    <recommendedName>
        <fullName>Bud site selection protein 22</fullName>
    </recommendedName>
</protein>
<reference key="1">
    <citation type="journal article" date="1997" name="Nature">
        <title>The nucleotide sequence of Saccharomyces cerevisiae chromosome XIII.</title>
        <authorList>
            <person name="Bowman S."/>
            <person name="Churcher C.M."/>
            <person name="Badcock K."/>
            <person name="Brown D."/>
            <person name="Chillingworth T."/>
            <person name="Connor R."/>
            <person name="Dedman K."/>
            <person name="Devlin K."/>
            <person name="Gentles S."/>
            <person name="Hamlin N."/>
            <person name="Hunt S."/>
            <person name="Jagels K."/>
            <person name="Lye G."/>
            <person name="Moule S."/>
            <person name="Odell C."/>
            <person name="Pearson D."/>
            <person name="Rajandream M.A."/>
            <person name="Rice P."/>
            <person name="Skelton J."/>
            <person name="Walsh S.V."/>
            <person name="Whitehead S."/>
            <person name="Barrell B.G."/>
        </authorList>
    </citation>
    <scope>NUCLEOTIDE SEQUENCE [LARGE SCALE GENOMIC DNA]</scope>
    <source>
        <strain>ATCC 204508 / S288c</strain>
    </source>
</reference>
<reference key="2">
    <citation type="journal article" date="2014" name="G3 (Bethesda)">
        <title>The reference genome sequence of Saccharomyces cerevisiae: Then and now.</title>
        <authorList>
            <person name="Engel S.R."/>
            <person name="Dietrich F.S."/>
            <person name="Fisk D.G."/>
            <person name="Binkley G."/>
            <person name="Balakrishnan R."/>
            <person name="Costanzo M.C."/>
            <person name="Dwight S.S."/>
            <person name="Hitz B.C."/>
            <person name="Karra K."/>
            <person name="Nash R.S."/>
            <person name="Weng S."/>
            <person name="Wong E.D."/>
            <person name="Lloyd P."/>
            <person name="Skrzypek M.S."/>
            <person name="Miyasato S.R."/>
            <person name="Simison M."/>
            <person name="Cherry J.M."/>
        </authorList>
    </citation>
    <scope>GENOME REANNOTATION</scope>
    <source>
        <strain>ATCC 204508 / S288c</strain>
    </source>
</reference>
<reference key="3">
    <citation type="journal article" date="2007" name="Genome Res.">
        <title>Approaching a complete repository of sequence-verified protein-encoding clones for Saccharomyces cerevisiae.</title>
        <authorList>
            <person name="Hu Y."/>
            <person name="Rolfs A."/>
            <person name="Bhullar B."/>
            <person name="Murthy T.V.S."/>
            <person name="Zhu C."/>
            <person name="Berger M.F."/>
            <person name="Camargo A.A."/>
            <person name="Kelley F."/>
            <person name="McCarron S."/>
            <person name="Jepson D."/>
            <person name="Richardson A."/>
            <person name="Raphael J."/>
            <person name="Moreira D."/>
            <person name="Taycher E."/>
            <person name="Zuo D."/>
            <person name="Mohr S."/>
            <person name="Kane M.F."/>
            <person name="Williamson J."/>
            <person name="Simpson A.J.G."/>
            <person name="Bulyk M.L."/>
            <person name="Harlow E."/>
            <person name="Marsischky G."/>
            <person name="Kolodner R.D."/>
            <person name="LaBaer J."/>
        </authorList>
    </citation>
    <scope>NUCLEOTIDE SEQUENCE [GENOMIC DNA]</scope>
    <source>
        <strain>ATCC 204508 / S288c</strain>
    </source>
</reference>
<reference key="4">
    <citation type="journal article" date="2001" name="Mol. Biol. Cell">
        <title>A genomic study of the bipolar bud site selection pattern in Saccharomyces cerevisiae.</title>
        <authorList>
            <person name="Ni L."/>
            <person name="Snyder M."/>
        </authorList>
    </citation>
    <scope>FUNCTION</scope>
    <scope>SUBCELLULAR LOCATION</scope>
</reference>
<reference key="5">
    <citation type="journal article" date="2003" name="Nature">
        <title>Global analysis of protein localization in budding yeast.</title>
        <authorList>
            <person name="Huh W.-K."/>
            <person name="Falvo J.V."/>
            <person name="Gerke L.C."/>
            <person name="Carroll A.S."/>
            <person name="Howson R.W."/>
            <person name="Weissman J.S."/>
            <person name="O'Shea E.K."/>
        </authorList>
    </citation>
    <scope>SUBCELLULAR LOCATION [LARGE SCALE ANALYSIS]</scope>
</reference>
<reference key="6">
    <citation type="journal article" date="2003" name="Nature">
        <title>Global analysis of protein expression in yeast.</title>
        <authorList>
            <person name="Ghaemmaghami S."/>
            <person name="Huh W.-K."/>
            <person name="Bower K."/>
            <person name="Howson R.W."/>
            <person name="Belle A."/>
            <person name="Dephoure N."/>
            <person name="O'Shea E.K."/>
            <person name="Weissman J.S."/>
        </authorList>
    </citation>
    <scope>LEVEL OF PROTEIN EXPRESSION [LARGE SCALE ANALYSIS]</scope>
</reference>
<reference key="7">
    <citation type="journal article" date="2007" name="J. Proteome Res.">
        <title>Large-scale phosphorylation analysis of alpha-factor-arrested Saccharomyces cerevisiae.</title>
        <authorList>
            <person name="Li X."/>
            <person name="Gerber S.A."/>
            <person name="Rudner A.D."/>
            <person name="Beausoleil S.A."/>
            <person name="Haas W."/>
            <person name="Villen J."/>
            <person name="Elias J.E."/>
            <person name="Gygi S.P."/>
        </authorList>
    </citation>
    <scope>PHOSPHORYLATION [LARGE SCALE ANALYSIS] AT THR-257; SER-367; THR-371 AND SER-375</scope>
    <scope>IDENTIFICATION BY MASS SPECTROMETRY [LARGE SCALE ANALYSIS]</scope>
    <source>
        <strain>ADR376</strain>
    </source>
</reference>
<reference key="8">
    <citation type="journal article" date="2007" name="Proc. Natl. Acad. Sci. U.S.A.">
        <title>Analysis of phosphorylation sites on proteins from Saccharomyces cerevisiae by electron transfer dissociation (ETD) mass spectrometry.</title>
        <authorList>
            <person name="Chi A."/>
            <person name="Huttenhower C."/>
            <person name="Geer L.Y."/>
            <person name="Coon J.J."/>
            <person name="Syka J.E.P."/>
            <person name="Bai D.L."/>
            <person name="Shabanowitz J."/>
            <person name="Burke D.J."/>
            <person name="Troyanskaya O.G."/>
            <person name="Hunt D.F."/>
        </authorList>
    </citation>
    <scope>PHOSPHORYLATION [LARGE SCALE ANALYSIS] AT THR-257</scope>
    <scope>IDENTIFICATION BY MASS SPECTROMETRY [LARGE SCALE ANALYSIS]</scope>
</reference>
<reference key="9">
    <citation type="journal article" date="2008" name="Mol. Cell. Proteomics">
        <title>A multidimensional chromatography technology for in-depth phosphoproteome analysis.</title>
        <authorList>
            <person name="Albuquerque C.P."/>
            <person name="Smolka M.B."/>
            <person name="Payne S.H."/>
            <person name="Bafna V."/>
            <person name="Eng J."/>
            <person name="Zhou H."/>
        </authorList>
    </citation>
    <scope>PHOSPHORYLATION [LARGE SCALE ANALYSIS] AT THR-257</scope>
    <scope>IDENTIFICATION BY MASS SPECTROMETRY [LARGE SCALE ANALYSIS]</scope>
</reference>
<reference key="10">
    <citation type="journal article" date="2009" name="Science">
        <title>Global analysis of Cdk1 substrate phosphorylation sites provides insights into evolution.</title>
        <authorList>
            <person name="Holt L.J."/>
            <person name="Tuch B.B."/>
            <person name="Villen J."/>
            <person name="Johnson A.D."/>
            <person name="Gygi S.P."/>
            <person name="Morgan D.O."/>
        </authorList>
    </citation>
    <scope>PHOSPHORYLATION [LARGE SCALE ANALYSIS] AT THR-257; SER-367; THR-371 AND SER-375</scope>
    <scope>IDENTIFICATION BY MASS SPECTROMETRY [LARGE SCALE ANALYSIS]</scope>
</reference>
<evidence type="ECO:0000255" key="1"/>
<evidence type="ECO:0000256" key="2">
    <source>
        <dbReference type="SAM" id="MobiDB-lite"/>
    </source>
</evidence>
<evidence type="ECO:0000269" key="3">
    <source>
    </source>
</evidence>
<evidence type="ECO:0000269" key="4">
    <source>
    </source>
</evidence>
<evidence type="ECO:0000269" key="5">
    <source>
    </source>
</evidence>
<evidence type="ECO:0000305" key="6"/>
<evidence type="ECO:0007744" key="7">
    <source>
    </source>
</evidence>
<evidence type="ECO:0007744" key="8">
    <source>
    </source>
</evidence>
<evidence type="ECO:0007744" key="9">
    <source>
    </source>
</evidence>
<evidence type="ECO:0007744" key="10">
    <source>
    </source>
</evidence>
<sequence>MPSESSVSIYKLDQLEYQYHYLTKSLQKFEPRYPKTAKLYNCIGKKNKKKIEKLLNSLELKTLDKELDESYSKLLNNKIHYYETHLSKCIKEQIQKISKKNSSKVKDAQKNKSPSIDIEKMLATQLSLDDLALFMTRFRLIKILHQRIKQKSKKIEGDTNNKTWLNNNDYSGYINDKTSKWNPSNIWNEVITKLPSCEKLNALIGQSKIVQNLTESFDLSICLIFGFDVSAMKAKKYGAREKTANANQTHSNIDYDTDDGNEKNAIDSKSNAIGAQTQSNKETTSDNEDLLIKEYEGMLGSSGDEGEGGGYLNPNINYNEVTDEEPSEASSDEDDSDERFSDSEENEPRRKKPKLHNLPELMAGYYSGNDTEEESDEDNKNVKGKKKKRDTAEDRTAREQMSNEPKRKNRRGQRARRKIWEKKYGSQAKHVQRELEKEMEDRKQRQIEYEARVAKREAKAASLEASRSREREDRRTETNNKKEKESASTGEEHPSWIAKRLAEEKLQKAKFEGKKIKFD</sequence>
<name>BUD22_YEAST</name>
<organism>
    <name type="scientific">Saccharomyces cerevisiae (strain ATCC 204508 / S288c)</name>
    <name type="common">Baker's yeast</name>
    <dbReference type="NCBI Taxonomy" id="559292"/>
    <lineage>
        <taxon>Eukaryota</taxon>
        <taxon>Fungi</taxon>
        <taxon>Dikarya</taxon>
        <taxon>Ascomycota</taxon>
        <taxon>Saccharomycotina</taxon>
        <taxon>Saccharomycetes</taxon>
        <taxon>Saccharomycetales</taxon>
        <taxon>Saccharomycetaceae</taxon>
        <taxon>Saccharomyces</taxon>
    </lineage>
</organism>
<dbReference type="EMBL" id="Z49211">
    <property type="protein sequence ID" value="CAA89115.1"/>
    <property type="molecule type" value="Genomic_DNA"/>
</dbReference>
<dbReference type="EMBL" id="AY692831">
    <property type="protein sequence ID" value="AAT92850.1"/>
    <property type="molecule type" value="Genomic_DNA"/>
</dbReference>
<dbReference type="EMBL" id="BK006946">
    <property type="protein sequence ID" value="DAA09912.1"/>
    <property type="molecule type" value="Genomic_DNA"/>
</dbReference>
<dbReference type="PIR" id="S54014">
    <property type="entry name" value="S54014"/>
</dbReference>
<dbReference type="RefSeq" id="NP_013727.1">
    <property type="nucleotide sequence ID" value="NM_001182510.1"/>
</dbReference>
<dbReference type="BioGRID" id="35185">
    <property type="interactions" value="56"/>
</dbReference>
<dbReference type="DIP" id="DIP-4103N"/>
<dbReference type="FunCoup" id="Q04347">
    <property type="interactions" value="317"/>
</dbReference>
<dbReference type="IntAct" id="Q04347">
    <property type="interactions" value="25"/>
</dbReference>
<dbReference type="MINT" id="Q04347"/>
<dbReference type="STRING" id="4932.YMR014W"/>
<dbReference type="iPTMnet" id="Q04347"/>
<dbReference type="PaxDb" id="4932-YMR014W"/>
<dbReference type="PeptideAtlas" id="Q04347"/>
<dbReference type="EnsemblFungi" id="YMR014W_mRNA">
    <property type="protein sequence ID" value="YMR014W"/>
    <property type="gene ID" value="YMR014W"/>
</dbReference>
<dbReference type="GeneID" id="855028"/>
<dbReference type="KEGG" id="sce:YMR014W"/>
<dbReference type="AGR" id="SGD:S000004616"/>
<dbReference type="SGD" id="S000004616">
    <property type="gene designation" value="BUD22"/>
</dbReference>
<dbReference type="VEuPathDB" id="FungiDB:YMR014W"/>
<dbReference type="eggNOG" id="ENOG502S6Z4">
    <property type="taxonomic scope" value="Eukaryota"/>
</dbReference>
<dbReference type="HOGENOM" id="CLU_024653_0_0_1"/>
<dbReference type="InParanoid" id="Q04347"/>
<dbReference type="OMA" id="ELMAGYY"/>
<dbReference type="OrthoDB" id="3364872at2759"/>
<dbReference type="BioCyc" id="YEAST:G3O-32721-MONOMER"/>
<dbReference type="BioGRID-ORCS" id="855028">
    <property type="hits" value="2 hits in 10 CRISPR screens"/>
</dbReference>
<dbReference type="PRO" id="PR:Q04347"/>
<dbReference type="Proteomes" id="UP000002311">
    <property type="component" value="Chromosome XIII"/>
</dbReference>
<dbReference type="RNAct" id="Q04347">
    <property type="molecule type" value="protein"/>
</dbReference>
<dbReference type="GO" id="GO:0030686">
    <property type="term" value="C:90S preribosome"/>
    <property type="evidence" value="ECO:0000314"/>
    <property type="project" value="SGD"/>
</dbReference>
<dbReference type="GO" id="GO:0005730">
    <property type="term" value="C:nucleolus"/>
    <property type="evidence" value="ECO:0007005"/>
    <property type="project" value="SGD"/>
</dbReference>
<dbReference type="GO" id="GO:0005634">
    <property type="term" value="C:nucleus"/>
    <property type="evidence" value="ECO:0000314"/>
    <property type="project" value="SGD"/>
</dbReference>
<dbReference type="GO" id="GO:0030490">
    <property type="term" value="P:maturation of SSU-rRNA"/>
    <property type="evidence" value="ECO:0000315"/>
    <property type="project" value="SGD"/>
</dbReference>
<dbReference type="GO" id="GO:0042274">
    <property type="term" value="P:ribosomal small subunit biogenesis"/>
    <property type="evidence" value="ECO:0000315"/>
    <property type="project" value="SGD"/>
</dbReference>
<dbReference type="InterPro" id="IPR037393">
    <property type="entry name" value="Bud22/SRFB1"/>
</dbReference>
<dbReference type="InterPro" id="IPR015158">
    <property type="entry name" value="Bud22_dom"/>
</dbReference>
<dbReference type="PANTHER" id="PTHR23325">
    <property type="entry name" value="SERUM RESPONSE FACTOR-BINDING"/>
    <property type="match status" value="1"/>
</dbReference>
<dbReference type="PANTHER" id="PTHR23325:SF1">
    <property type="entry name" value="SERUM RESPONSE FACTOR-BINDING PROTEIN 1"/>
    <property type="match status" value="1"/>
</dbReference>
<dbReference type="Pfam" id="PF09073">
    <property type="entry name" value="BUD22"/>
    <property type="match status" value="1"/>
</dbReference>
<gene>
    <name type="primary">BUD22</name>
    <name type="ordered locus">YMR014W</name>
    <name type="ORF">YM9711.01</name>
</gene>
<comment type="function">
    <text evidence="3">Involved in positioning the proximal bud pole signal.</text>
</comment>
<comment type="subcellular location">
    <subcellularLocation>
        <location evidence="3 4">Nucleus</location>
    </subcellularLocation>
</comment>
<comment type="miscellaneous">
    <text evidence="5">Present with 3250 molecules/cell in log phase SD medium.</text>
</comment>
<comment type="similarity">
    <text evidence="6">Belongs to the BUD22 family.</text>
</comment>
<keyword id="KW-0175">Coiled coil</keyword>
<keyword id="KW-0539">Nucleus</keyword>
<keyword id="KW-0597">Phosphoprotein</keyword>
<keyword id="KW-1185">Reference proteome</keyword>